<gene>
    <name type="ordered locus">At1g70730</name>
    <name type="ORF">F5A18.9</name>
</gene>
<proteinExistence type="evidence at protein level"/>
<protein>
    <recommendedName>
        <fullName>Probable phosphoglucomutase, cytoplasmic 2</fullName>
        <shortName>PGM 2</shortName>
        <ecNumber evidence="3">5.4.2.2</ecNumber>
    </recommendedName>
    <alternativeName>
        <fullName>Glucose phosphomutase 2</fullName>
    </alternativeName>
</protein>
<evidence type="ECO:0000250" key="1">
    <source>
        <dbReference type="UniProtKB" id="P00949"/>
    </source>
</evidence>
<evidence type="ECO:0000250" key="2">
    <source>
        <dbReference type="UniProtKB" id="P36871"/>
    </source>
</evidence>
<evidence type="ECO:0000250" key="3">
    <source>
        <dbReference type="UniProtKB" id="P93804"/>
    </source>
</evidence>
<evidence type="ECO:0000256" key="4">
    <source>
        <dbReference type="SAM" id="MobiDB-lite"/>
    </source>
</evidence>
<evidence type="ECO:0000305" key="5"/>
<reference key="1">
    <citation type="journal article" date="2000" name="Nature">
        <title>Sequence and analysis of chromosome 1 of the plant Arabidopsis thaliana.</title>
        <authorList>
            <person name="Theologis A."/>
            <person name="Ecker J.R."/>
            <person name="Palm C.J."/>
            <person name="Federspiel N.A."/>
            <person name="Kaul S."/>
            <person name="White O."/>
            <person name="Alonso J."/>
            <person name="Altafi H."/>
            <person name="Araujo R."/>
            <person name="Bowman C.L."/>
            <person name="Brooks S.Y."/>
            <person name="Buehler E."/>
            <person name="Chan A."/>
            <person name="Chao Q."/>
            <person name="Chen H."/>
            <person name="Cheuk R.F."/>
            <person name="Chin C.W."/>
            <person name="Chung M.K."/>
            <person name="Conn L."/>
            <person name="Conway A.B."/>
            <person name="Conway A.R."/>
            <person name="Creasy T.H."/>
            <person name="Dewar K."/>
            <person name="Dunn P."/>
            <person name="Etgu P."/>
            <person name="Feldblyum T.V."/>
            <person name="Feng J.-D."/>
            <person name="Fong B."/>
            <person name="Fujii C.Y."/>
            <person name="Gill J.E."/>
            <person name="Goldsmith A.D."/>
            <person name="Haas B."/>
            <person name="Hansen N.F."/>
            <person name="Hughes B."/>
            <person name="Huizar L."/>
            <person name="Hunter J.L."/>
            <person name="Jenkins J."/>
            <person name="Johnson-Hopson C."/>
            <person name="Khan S."/>
            <person name="Khaykin E."/>
            <person name="Kim C.J."/>
            <person name="Koo H.L."/>
            <person name="Kremenetskaia I."/>
            <person name="Kurtz D.B."/>
            <person name="Kwan A."/>
            <person name="Lam B."/>
            <person name="Langin-Hooper S."/>
            <person name="Lee A."/>
            <person name="Lee J.M."/>
            <person name="Lenz C.A."/>
            <person name="Li J.H."/>
            <person name="Li Y.-P."/>
            <person name="Lin X."/>
            <person name="Liu S.X."/>
            <person name="Liu Z.A."/>
            <person name="Luros J.S."/>
            <person name="Maiti R."/>
            <person name="Marziali A."/>
            <person name="Militscher J."/>
            <person name="Miranda M."/>
            <person name="Nguyen M."/>
            <person name="Nierman W.C."/>
            <person name="Osborne B.I."/>
            <person name="Pai G."/>
            <person name="Peterson J."/>
            <person name="Pham P.K."/>
            <person name="Rizzo M."/>
            <person name="Rooney T."/>
            <person name="Rowley D."/>
            <person name="Sakano H."/>
            <person name="Salzberg S.L."/>
            <person name="Schwartz J.R."/>
            <person name="Shinn P."/>
            <person name="Southwick A.M."/>
            <person name="Sun H."/>
            <person name="Tallon L.J."/>
            <person name="Tambunga G."/>
            <person name="Toriumi M.J."/>
            <person name="Town C.D."/>
            <person name="Utterback T."/>
            <person name="Van Aken S."/>
            <person name="Vaysberg M."/>
            <person name="Vysotskaia V.S."/>
            <person name="Walker M."/>
            <person name="Wu D."/>
            <person name="Yu G."/>
            <person name="Fraser C.M."/>
            <person name="Venter J.C."/>
            <person name="Davis R.W."/>
        </authorList>
    </citation>
    <scope>NUCLEOTIDE SEQUENCE [LARGE SCALE GENOMIC DNA]</scope>
    <source>
        <strain>cv. Columbia</strain>
    </source>
</reference>
<reference key="2">
    <citation type="journal article" date="2017" name="Plant J.">
        <title>Araport11: a complete reannotation of the Arabidopsis thaliana reference genome.</title>
        <authorList>
            <person name="Cheng C.Y."/>
            <person name="Krishnakumar V."/>
            <person name="Chan A.P."/>
            <person name="Thibaud-Nissen F."/>
            <person name="Schobel S."/>
            <person name="Town C.D."/>
        </authorList>
    </citation>
    <scope>GENOME REANNOTATION</scope>
    <source>
        <strain>cv. Columbia</strain>
    </source>
</reference>
<reference key="3">
    <citation type="journal article" date="2003" name="Science">
        <title>Empirical analysis of transcriptional activity in the Arabidopsis genome.</title>
        <authorList>
            <person name="Yamada K."/>
            <person name="Lim J."/>
            <person name="Dale J.M."/>
            <person name="Chen H."/>
            <person name="Shinn P."/>
            <person name="Palm C.J."/>
            <person name="Southwick A.M."/>
            <person name="Wu H.C."/>
            <person name="Kim C.J."/>
            <person name="Nguyen M."/>
            <person name="Pham P.K."/>
            <person name="Cheuk R.F."/>
            <person name="Karlin-Newmann G."/>
            <person name="Liu S.X."/>
            <person name="Lam B."/>
            <person name="Sakano H."/>
            <person name="Wu T."/>
            <person name="Yu G."/>
            <person name="Miranda M."/>
            <person name="Quach H.L."/>
            <person name="Tripp M."/>
            <person name="Chang C.H."/>
            <person name="Lee J.M."/>
            <person name="Toriumi M.J."/>
            <person name="Chan M.M."/>
            <person name="Tang C.C."/>
            <person name="Onodera C.S."/>
            <person name="Deng J.M."/>
            <person name="Akiyama K."/>
            <person name="Ansari Y."/>
            <person name="Arakawa T."/>
            <person name="Banh J."/>
            <person name="Banno F."/>
            <person name="Bowser L."/>
            <person name="Brooks S.Y."/>
            <person name="Carninci P."/>
            <person name="Chao Q."/>
            <person name="Choy N."/>
            <person name="Enju A."/>
            <person name="Goldsmith A.D."/>
            <person name="Gurjal M."/>
            <person name="Hansen N.F."/>
            <person name="Hayashizaki Y."/>
            <person name="Johnson-Hopson C."/>
            <person name="Hsuan V.W."/>
            <person name="Iida K."/>
            <person name="Karnes M."/>
            <person name="Khan S."/>
            <person name="Koesema E."/>
            <person name="Ishida J."/>
            <person name="Jiang P.X."/>
            <person name="Jones T."/>
            <person name="Kawai J."/>
            <person name="Kamiya A."/>
            <person name="Meyers C."/>
            <person name="Nakajima M."/>
            <person name="Narusaka M."/>
            <person name="Seki M."/>
            <person name="Sakurai T."/>
            <person name="Satou M."/>
            <person name="Tamse R."/>
            <person name="Vaysberg M."/>
            <person name="Wallender E.K."/>
            <person name="Wong C."/>
            <person name="Yamamura Y."/>
            <person name="Yuan S."/>
            <person name="Shinozaki K."/>
            <person name="Davis R.W."/>
            <person name="Theologis A."/>
            <person name="Ecker J.R."/>
        </authorList>
    </citation>
    <scope>NUCLEOTIDE SEQUENCE [LARGE SCALE MRNA]</scope>
    <source>
        <strain>cv. Columbia</strain>
    </source>
</reference>
<reference key="4">
    <citation type="journal article" date="2007" name="Mol. Cell. Proteomics">
        <title>Multidimensional protein identification technology (MudPIT) analysis of ubiquitinated proteins in plants.</title>
        <authorList>
            <person name="Maor R."/>
            <person name="Jones A."/>
            <person name="Nuehse T.S."/>
            <person name="Studholme D.J."/>
            <person name="Peck S.C."/>
            <person name="Shirasu K."/>
        </authorList>
    </citation>
    <scope>IDENTIFICATION BY MASS SPECTROMETRY [LARGE SCALE ANALYSIS]</scope>
    <source>
        <strain>cv. Landsberg erecta</strain>
    </source>
</reference>
<dbReference type="EC" id="5.4.2.2" evidence="3"/>
<dbReference type="EMBL" id="AC011663">
    <property type="protein sequence ID" value="AAG52345.1"/>
    <property type="molecule type" value="Genomic_DNA"/>
</dbReference>
<dbReference type="EMBL" id="CP002684">
    <property type="protein sequence ID" value="AEE35105.1"/>
    <property type="molecule type" value="Genomic_DNA"/>
</dbReference>
<dbReference type="EMBL" id="AY090231">
    <property type="protein sequence ID" value="AAL90895.1"/>
    <property type="molecule type" value="mRNA"/>
</dbReference>
<dbReference type="EMBL" id="BT002627">
    <property type="protein sequence ID" value="AAO11543.1"/>
    <property type="molecule type" value="mRNA"/>
</dbReference>
<dbReference type="PIR" id="G96731">
    <property type="entry name" value="G96731"/>
</dbReference>
<dbReference type="RefSeq" id="NP_177230.1">
    <molecule id="Q9SGC1-1"/>
    <property type="nucleotide sequence ID" value="NM_105741.4"/>
</dbReference>
<dbReference type="SMR" id="Q9SGC1"/>
<dbReference type="BioGRID" id="28630">
    <property type="interactions" value="24"/>
</dbReference>
<dbReference type="FunCoup" id="Q9SGC1">
    <property type="interactions" value="2253"/>
</dbReference>
<dbReference type="STRING" id="3702.Q9SGC1"/>
<dbReference type="GlyGen" id="Q9SGC1">
    <property type="glycosylation" value="2 sites"/>
</dbReference>
<dbReference type="iPTMnet" id="Q9SGC1"/>
<dbReference type="MetOSite" id="Q9SGC1"/>
<dbReference type="PaxDb" id="3702-AT1G70730.3"/>
<dbReference type="ProteomicsDB" id="235099">
    <molecule id="Q9SGC1-1"/>
</dbReference>
<dbReference type="EnsemblPlants" id="AT1G70730.1">
    <molecule id="Q9SGC1-1"/>
    <property type="protein sequence ID" value="AT1G70730.1"/>
    <property type="gene ID" value="AT1G70730"/>
</dbReference>
<dbReference type="GeneID" id="843410"/>
<dbReference type="Gramene" id="AT1G70730.1">
    <molecule id="Q9SGC1-1"/>
    <property type="protein sequence ID" value="AT1G70730.1"/>
    <property type="gene ID" value="AT1G70730"/>
</dbReference>
<dbReference type="KEGG" id="ath:AT1G70730"/>
<dbReference type="Araport" id="AT1G70730"/>
<dbReference type="TAIR" id="AT1G70730">
    <property type="gene designation" value="PGM2"/>
</dbReference>
<dbReference type="eggNOG" id="KOG0625">
    <property type="taxonomic scope" value="Eukaryota"/>
</dbReference>
<dbReference type="InParanoid" id="Q9SGC1"/>
<dbReference type="OMA" id="HHGMMST"/>
<dbReference type="PhylomeDB" id="Q9SGC1"/>
<dbReference type="BRENDA" id="5.4.2.2">
    <property type="organism ID" value="399"/>
</dbReference>
<dbReference type="CD-CODE" id="4299E36E">
    <property type="entry name" value="Nucleolus"/>
</dbReference>
<dbReference type="PRO" id="PR:Q9SGC1"/>
<dbReference type="Proteomes" id="UP000006548">
    <property type="component" value="Chromosome 1"/>
</dbReference>
<dbReference type="ExpressionAtlas" id="Q9SGC1">
    <property type="expression patterns" value="baseline and differential"/>
</dbReference>
<dbReference type="GO" id="GO:0005737">
    <property type="term" value="C:cytoplasm"/>
    <property type="evidence" value="ECO:0007669"/>
    <property type="project" value="UniProtKB-SubCell"/>
</dbReference>
<dbReference type="GO" id="GO:0000287">
    <property type="term" value="F:magnesium ion binding"/>
    <property type="evidence" value="ECO:0007669"/>
    <property type="project" value="InterPro"/>
</dbReference>
<dbReference type="GO" id="GO:0004614">
    <property type="term" value="F:phosphoglucomutase activity"/>
    <property type="evidence" value="ECO:0007669"/>
    <property type="project" value="UniProtKB-EC"/>
</dbReference>
<dbReference type="GO" id="GO:0006006">
    <property type="term" value="P:glucose metabolic process"/>
    <property type="evidence" value="ECO:0007669"/>
    <property type="project" value="UniProtKB-KW"/>
</dbReference>
<dbReference type="CDD" id="cd03085">
    <property type="entry name" value="PGM1"/>
    <property type="match status" value="1"/>
</dbReference>
<dbReference type="FunFam" id="3.30.310.50:FF:000002">
    <property type="entry name" value="Phosphoglucomutase 5"/>
    <property type="match status" value="1"/>
</dbReference>
<dbReference type="FunFam" id="3.40.120.10:FF:000004">
    <property type="entry name" value="Phosphoglucomutase 5"/>
    <property type="match status" value="1"/>
</dbReference>
<dbReference type="FunFam" id="3.40.120.10:FF:000005">
    <property type="entry name" value="Phosphoglucomutase 5"/>
    <property type="match status" value="1"/>
</dbReference>
<dbReference type="FunFam" id="3.40.120.10:FF:000009">
    <property type="entry name" value="Phosphoglucomutase, cytoplasmic 1"/>
    <property type="match status" value="1"/>
</dbReference>
<dbReference type="Gene3D" id="3.40.120.10">
    <property type="entry name" value="Alpha-D-Glucose-1,6-Bisphosphate, subunit A, domain 3"/>
    <property type="match status" value="3"/>
</dbReference>
<dbReference type="Gene3D" id="3.30.310.50">
    <property type="entry name" value="Alpha-D-phosphohexomutase, C-terminal domain"/>
    <property type="match status" value="1"/>
</dbReference>
<dbReference type="InterPro" id="IPR005844">
    <property type="entry name" value="A-D-PHexomutase_a/b/a-I"/>
</dbReference>
<dbReference type="InterPro" id="IPR016055">
    <property type="entry name" value="A-D-PHexomutase_a/b/a-I/II/III"/>
</dbReference>
<dbReference type="InterPro" id="IPR005845">
    <property type="entry name" value="A-D-PHexomutase_a/b/a-II"/>
</dbReference>
<dbReference type="InterPro" id="IPR005846">
    <property type="entry name" value="A-D-PHexomutase_a/b/a-III"/>
</dbReference>
<dbReference type="InterPro" id="IPR036900">
    <property type="entry name" value="A-D-PHexomutase_C_sf"/>
</dbReference>
<dbReference type="InterPro" id="IPR016066">
    <property type="entry name" value="A-D-PHexomutase_CS"/>
</dbReference>
<dbReference type="InterPro" id="IPR005841">
    <property type="entry name" value="Alpha-D-phosphohexomutase_SF"/>
</dbReference>
<dbReference type="InterPro" id="IPR045244">
    <property type="entry name" value="PGM"/>
</dbReference>
<dbReference type="NCBIfam" id="NF005737">
    <property type="entry name" value="PRK07564.1-1"/>
    <property type="match status" value="1"/>
</dbReference>
<dbReference type="PANTHER" id="PTHR22573:SF2">
    <property type="entry name" value="PHOSPHOGLUCOMUTASE"/>
    <property type="match status" value="1"/>
</dbReference>
<dbReference type="PANTHER" id="PTHR22573">
    <property type="entry name" value="PHOSPHOHEXOMUTASE FAMILY MEMBER"/>
    <property type="match status" value="1"/>
</dbReference>
<dbReference type="Pfam" id="PF24947">
    <property type="entry name" value="PGM1_C_vert_fung"/>
    <property type="match status" value="1"/>
</dbReference>
<dbReference type="Pfam" id="PF02878">
    <property type="entry name" value="PGM_PMM_I"/>
    <property type="match status" value="1"/>
</dbReference>
<dbReference type="Pfam" id="PF02879">
    <property type="entry name" value="PGM_PMM_II"/>
    <property type="match status" value="1"/>
</dbReference>
<dbReference type="Pfam" id="PF02880">
    <property type="entry name" value="PGM_PMM_III"/>
    <property type="match status" value="1"/>
</dbReference>
<dbReference type="PRINTS" id="PR00509">
    <property type="entry name" value="PGMPMM"/>
</dbReference>
<dbReference type="SUPFAM" id="SSF55957">
    <property type="entry name" value="Phosphoglucomutase, C-terminal domain"/>
    <property type="match status" value="1"/>
</dbReference>
<dbReference type="SUPFAM" id="SSF53738">
    <property type="entry name" value="Phosphoglucomutase, first 3 domains"/>
    <property type="match status" value="3"/>
</dbReference>
<dbReference type="PROSITE" id="PS00710">
    <property type="entry name" value="PGM_PMM"/>
    <property type="match status" value="1"/>
</dbReference>
<keyword id="KW-0025">Alternative splicing</keyword>
<keyword id="KW-0119">Carbohydrate metabolism</keyword>
<keyword id="KW-0963">Cytoplasm</keyword>
<keyword id="KW-0313">Glucose metabolism</keyword>
<keyword id="KW-0413">Isomerase</keyword>
<keyword id="KW-0460">Magnesium</keyword>
<keyword id="KW-0479">Metal-binding</keyword>
<keyword id="KW-0597">Phosphoprotein</keyword>
<keyword id="KW-1185">Reference proteome</keyword>
<feature type="chain" id="PRO_0000147799" description="Probable phosphoglucomutase, cytoplasmic 2">
    <location>
        <begin position="1"/>
        <end position="585"/>
    </location>
</feature>
<feature type="region of interest" description="Disordered" evidence="4">
    <location>
        <begin position="1"/>
        <end position="20"/>
    </location>
</feature>
<feature type="active site" description="Phosphoserine intermediate" evidence="1">
    <location>
        <position position="124"/>
    </location>
</feature>
<feature type="binding site" evidence="1">
    <location>
        <position position="25"/>
    </location>
    <ligand>
        <name>alpha-D-glucose 1,6-bisphosphate</name>
        <dbReference type="ChEBI" id="CHEBI:58392"/>
    </ligand>
</feature>
<feature type="binding site" evidence="1">
    <location>
        <position position="124"/>
    </location>
    <ligand>
        <name>alpha-D-glucose 1,6-bisphosphate</name>
        <dbReference type="ChEBI" id="CHEBI:58392"/>
    </ligand>
</feature>
<feature type="binding site" description="via phosphate group" evidence="1">
    <location>
        <position position="124"/>
    </location>
    <ligand>
        <name>Mg(2+)</name>
        <dbReference type="ChEBI" id="CHEBI:18420"/>
    </ligand>
</feature>
<feature type="binding site" evidence="1">
    <location>
        <position position="301"/>
    </location>
    <ligand>
        <name>Mg(2+)</name>
        <dbReference type="ChEBI" id="CHEBI:18420"/>
    </ligand>
</feature>
<feature type="binding site" evidence="1">
    <location>
        <position position="303"/>
    </location>
    <ligand>
        <name>Mg(2+)</name>
        <dbReference type="ChEBI" id="CHEBI:18420"/>
    </ligand>
</feature>
<feature type="binding site" evidence="1">
    <location>
        <position position="305"/>
    </location>
    <ligand>
        <name>alpha-D-glucose 1,6-bisphosphate</name>
        <dbReference type="ChEBI" id="CHEBI:58392"/>
    </ligand>
</feature>
<feature type="binding site" evidence="1">
    <location>
        <position position="305"/>
    </location>
    <ligand>
        <name>Mg(2+)</name>
        <dbReference type="ChEBI" id="CHEBI:18420"/>
    </ligand>
</feature>
<feature type="binding site" evidence="1">
    <location>
        <position position="306"/>
    </location>
    <ligand>
        <name>alpha-D-glucose 1,6-bisphosphate</name>
        <dbReference type="ChEBI" id="CHEBI:58392"/>
    </ligand>
</feature>
<feature type="binding site" evidence="1">
    <location>
        <position position="369"/>
    </location>
    <ligand>
        <name>alpha-D-glucose 1,6-bisphosphate</name>
        <dbReference type="ChEBI" id="CHEBI:58392"/>
    </ligand>
</feature>
<feature type="binding site" evidence="1">
    <location>
        <position position="388"/>
    </location>
    <ligand>
        <name>alpha-D-glucose 1,6-bisphosphate</name>
        <dbReference type="ChEBI" id="CHEBI:58392"/>
    </ligand>
</feature>
<feature type="binding site" evidence="1">
    <location>
        <position position="390"/>
    </location>
    <ligand>
        <name>alpha-D-glucose 1,6-bisphosphate</name>
        <dbReference type="ChEBI" id="CHEBI:58392"/>
    </ligand>
</feature>
<feature type="binding site" evidence="1">
    <location>
        <position position="401"/>
    </location>
    <ligand>
        <name>alpha-D-glucose 1,6-bisphosphate</name>
        <dbReference type="ChEBI" id="CHEBI:58392"/>
    </ligand>
</feature>
<feature type="modified residue" description="Phosphoserine" evidence="1">
    <location>
        <position position="124"/>
    </location>
</feature>
<accession>Q9SGC1</accession>
<sequence length="585" mass="63482">MVSFKVSLVSTSPIDGQKPGTSGLRKKVKVFKQPNYLENFVQATFNALTTEKVKGATLVVSGDGRYYSEQAIQIIVKMAAANGVRRVWVGQNSLLSTPAVSAIIRERVGADGSKATGAFILTASHNPGGPTEDFGIKYNMENGGPAPESITDKIYENTKTIKEYPIAEDLPRVDISTIGITSFEGPEGKFDVEVFDSADDYVKLMKSIFDFESIKKLLSYPKFTFCYDALHGVAGAYAHRIFVEELGAPESSLLNCVPKEDFGGGHPDPNLTYAKELVARMGLSKTDDAGGEPPEFGAAADGDADRNMILGKRFFVTPSDSVAIIAANAVGAIPYFSSGLKGVARSMPTSAALDVVAKNLGLKFFEVPTGWKFFGNLMDAGMCSVCGEESFGTGSDHIREKDGIWAVLAWLSILAHKNKETLDGNAKLVTVEDIVRQHWATYGRHYYTRYDYENVDATAAKELMGLLVKLQSSLPEVNKIIKGIHPEVANVASADEFEYKDPVDGSVSKHQGIRYLFEDGSRLVFRLSGTGSEGATIRLYIEQYEKDASKIGRDSQDALGPLVDVALKLSKMQEFTGRSSPTVIT</sequence>
<organism>
    <name type="scientific">Arabidopsis thaliana</name>
    <name type="common">Mouse-ear cress</name>
    <dbReference type="NCBI Taxonomy" id="3702"/>
    <lineage>
        <taxon>Eukaryota</taxon>
        <taxon>Viridiplantae</taxon>
        <taxon>Streptophyta</taxon>
        <taxon>Embryophyta</taxon>
        <taxon>Tracheophyta</taxon>
        <taxon>Spermatophyta</taxon>
        <taxon>Magnoliopsida</taxon>
        <taxon>eudicotyledons</taxon>
        <taxon>Gunneridae</taxon>
        <taxon>Pentapetalae</taxon>
        <taxon>rosids</taxon>
        <taxon>malvids</taxon>
        <taxon>Brassicales</taxon>
        <taxon>Brassicaceae</taxon>
        <taxon>Camelineae</taxon>
        <taxon>Arabidopsis</taxon>
    </lineage>
</organism>
<name>PGMC2_ARATH</name>
<comment type="function">
    <text evidence="2 3">Catalyzes the reversible isomerization of alpha-D-glucose 1-phosphate to alpha-D-glucose 6-phosphate (By similarity). The mechanism proceeds via the intermediate compound alpha-D-glucose 1,6-bisphosphate (By similarity). This enzyme participates in both the breakdown and synthesis of glucose (By similarity).</text>
</comment>
<comment type="catalytic activity">
    <reaction evidence="3">
        <text>alpha-D-glucose 1-phosphate = alpha-D-glucose 6-phosphate</text>
        <dbReference type="Rhea" id="RHEA:23536"/>
        <dbReference type="ChEBI" id="CHEBI:58225"/>
        <dbReference type="ChEBI" id="CHEBI:58601"/>
        <dbReference type="EC" id="5.4.2.2"/>
    </reaction>
</comment>
<comment type="catalytic activity">
    <reaction evidence="3">
        <text>O-phospho-L-seryl-[protein] + alpha-D-glucose 1-phosphate = alpha-D-glucose 1,6-bisphosphate + L-seryl-[protein]</text>
        <dbReference type="Rhea" id="RHEA:68748"/>
        <dbReference type="Rhea" id="RHEA-COMP:9863"/>
        <dbReference type="Rhea" id="RHEA-COMP:11604"/>
        <dbReference type="ChEBI" id="CHEBI:29999"/>
        <dbReference type="ChEBI" id="CHEBI:58392"/>
        <dbReference type="ChEBI" id="CHEBI:58601"/>
        <dbReference type="ChEBI" id="CHEBI:83421"/>
    </reaction>
</comment>
<comment type="catalytic activity">
    <reaction evidence="3">
        <text>alpha-D-glucose 1,6-bisphosphate + L-seryl-[protein] = O-phospho-L-seryl-[protein] + alpha-D-glucose 6-phosphate</text>
        <dbReference type="Rhea" id="RHEA:68752"/>
        <dbReference type="Rhea" id="RHEA-COMP:9863"/>
        <dbReference type="Rhea" id="RHEA-COMP:11604"/>
        <dbReference type="ChEBI" id="CHEBI:29999"/>
        <dbReference type="ChEBI" id="CHEBI:58225"/>
        <dbReference type="ChEBI" id="CHEBI:58392"/>
        <dbReference type="ChEBI" id="CHEBI:83421"/>
    </reaction>
</comment>
<comment type="cofactor">
    <cofactor evidence="1">
        <name>Mg(2+)</name>
        <dbReference type="ChEBI" id="CHEBI:18420"/>
    </cofactor>
    <text evidence="1">Binds 1 Mg(2+) ion per subunit.</text>
</comment>
<comment type="subunit">
    <text evidence="1">Monomer.</text>
</comment>
<comment type="subcellular location">
    <subcellularLocation>
        <location evidence="3">Cytoplasm</location>
    </subcellularLocation>
</comment>
<comment type="alternative products">
    <event type="alternative splicing"/>
    <isoform>
        <id>Q9SGC1-1</id>
        <name>1</name>
        <sequence type="displayed"/>
    </isoform>
    <text>A number of isoforms are produced. According to EST sequences.</text>
</comment>
<comment type="similarity">
    <text evidence="5">Belongs to the phosphohexose mutase family.</text>
</comment>